<protein>
    <recommendedName>
        <fullName evidence="1">DNA mismatch repair protein MutS</fullName>
    </recommendedName>
</protein>
<dbReference type="EMBL" id="CP000390">
    <property type="protein sequence ID" value="ABG65398.1"/>
    <property type="molecule type" value="Genomic_DNA"/>
</dbReference>
<dbReference type="SMR" id="Q11B27"/>
<dbReference type="STRING" id="266779.Meso_4031"/>
<dbReference type="KEGG" id="mes:Meso_4031"/>
<dbReference type="eggNOG" id="COG0249">
    <property type="taxonomic scope" value="Bacteria"/>
</dbReference>
<dbReference type="HOGENOM" id="CLU_002472_4_0_5"/>
<dbReference type="OrthoDB" id="9802448at2"/>
<dbReference type="GO" id="GO:0005829">
    <property type="term" value="C:cytosol"/>
    <property type="evidence" value="ECO:0007669"/>
    <property type="project" value="TreeGrafter"/>
</dbReference>
<dbReference type="GO" id="GO:0005524">
    <property type="term" value="F:ATP binding"/>
    <property type="evidence" value="ECO:0007669"/>
    <property type="project" value="UniProtKB-UniRule"/>
</dbReference>
<dbReference type="GO" id="GO:0140664">
    <property type="term" value="F:ATP-dependent DNA damage sensor activity"/>
    <property type="evidence" value="ECO:0007669"/>
    <property type="project" value="InterPro"/>
</dbReference>
<dbReference type="GO" id="GO:0003684">
    <property type="term" value="F:damaged DNA binding"/>
    <property type="evidence" value="ECO:0007669"/>
    <property type="project" value="UniProtKB-UniRule"/>
</dbReference>
<dbReference type="GO" id="GO:0030983">
    <property type="term" value="F:mismatched DNA binding"/>
    <property type="evidence" value="ECO:0007669"/>
    <property type="project" value="InterPro"/>
</dbReference>
<dbReference type="GO" id="GO:0006298">
    <property type="term" value="P:mismatch repair"/>
    <property type="evidence" value="ECO:0007669"/>
    <property type="project" value="UniProtKB-UniRule"/>
</dbReference>
<dbReference type="CDD" id="cd03284">
    <property type="entry name" value="ABC_MutS1"/>
    <property type="match status" value="1"/>
</dbReference>
<dbReference type="FunFam" id="3.40.1170.10:FF:000001">
    <property type="entry name" value="DNA mismatch repair protein MutS"/>
    <property type="match status" value="1"/>
</dbReference>
<dbReference type="FunFam" id="3.40.50.300:FF:000870">
    <property type="entry name" value="MutS protein homolog 4"/>
    <property type="match status" value="1"/>
</dbReference>
<dbReference type="Gene3D" id="1.10.1420.10">
    <property type="match status" value="2"/>
</dbReference>
<dbReference type="Gene3D" id="6.10.140.430">
    <property type="match status" value="1"/>
</dbReference>
<dbReference type="Gene3D" id="3.40.1170.10">
    <property type="entry name" value="DNA repair protein MutS, domain I"/>
    <property type="match status" value="1"/>
</dbReference>
<dbReference type="Gene3D" id="3.30.420.110">
    <property type="entry name" value="MutS, connector domain"/>
    <property type="match status" value="1"/>
</dbReference>
<dbReference type="Gene3D" id="3.40.50.300">
    <property type="entry name" value="P-loop containing nucleotide triphosphate hydrolases"/>
    <property type="match status" value="1"/>
</dbReference>
<dbReference type="HAMAP" id="MF_00096">
    <property type="entry name" value="MutS"/>
    <property type="match status" value="1"/>
</dbReference>
<dbReference type="InterPro" id="IPR005748">
    <property type="entry name" value="DNA_mismatch_repair_MutS"/>
</dbReference>
<dbReference type="InterPro" id="IPR007695">
    <property type="entry name" value="DNA_mismatch_repair_MutS-lik_N"/>
</dbReference>
<dbReference type="InterPro" id="IPR017261">
    <property type="entry name" value="DNA_mismatch_repair_MutS/MSH"/>
</dbReference>
<dbReference type="InterPro" id="IPR000432">
    <property type="entry name" value="DNA_mismatch_repair_MutS_C"/>
</dbReference>
<dbReference type="InterPro" id="IPR007861">
    <property type="entry name" value="DNA_mismatch_repair_MutS_clamp"/>
</dbReference>
<dbReference type="InterPro" id="IPR007696">
    <property type="entry name" value="DNA_mismatch_repair_MutS_core"/>
</dbReference>
<dbReference type="InterPro" id="IPR016151">
    <property type="entry name" value="DNA_mismatch_repair_MutS_N"/>
</dbReference>
<dbReference type="InterPro" id="IPR036187">
    <property type="entry name" value="DNA_mismatch_repair_MutS_sf"/>
</dbReference>
<dbReference type="InterPro" id="IPR007860">
    <property type="entry name" value="DNA_mmatch_repair_MutS_con_dom"/>
</dbReference>
<dbReference type="InterPro" id="IPR045076">
    <property type="entry name" value="MutS"/>
</dbReference>
<dbReference type="InterPro" id="IPR036678">
    <property type="entry name" value="MutS_con_dom_sf"/>
</dbReference>
<dbReference type="InterPro" id="IPR027417">
    <property type="entry name" value="P-loop_NTPase"/>
</dbReference>
<dbReference type="NCBIfam" id="TIGR01070">
    <property type="entry name" value="mutS1"/>
    <property type="match status" value="1"/>
</dbReference>
<dbReference type="NCBIfam" id="NF003810">
    <property type="entry name" value="PRK05399.1"/>
    <property type="match status" value="1"/>
</dbReference>
<dbReference type="PANTHER" id="PTHR11361:SF34">
    <property type="entry name" value="DNA MISMATCH REPAIR PROTEIN MSH1, MITOCHONDRIAL"/>
    <property type="match status" value="1"/>
</dbReference>
<dbReference type="PANTHER" id="PTHR11361">
    <property type="entry name" value="DNA MISMATCH REPAIR PROTEIN MUTS FAMILY MEMBER"/>
    <property type="match status" value="1"/>
</dbReference>
<dbReference type="Pfam" id="PF01624">
    <property type="entry name" value="MutS_I"/>
    <property type="match status" value="1"/>
</dbReference>
<dbReference type="Pfam" id="PF05188">
    <property type="entry name" value="MutS_II"/>
    <property type="match status" value="1"/>
</dbReference>
<dbReference type="Pfam" id="PF05192">
    <property type="entry name" value="MutS_III"/>
    <property type="match status" value="1"/>
</dbReference>
<dbReference type="Pfam" id="PF05190">
    <property type="entry name" value="MutS_IV"/>
    <property type="match status" value="1"/>
</dbReference>
<dbReference type="Pfam" id="PF00488">
    <property type="entry name" value="MutS_V"/>
    <property type="match status" value="1"/>
</dbReference>
<dbReference type="PIRSF" id="PIRSF037677">
    <property type="entry name" value="DNA_mis_repair_Msh6"/>
    <property type="match status" value="1"/>
</dbReference>
<dbReference type="SMART" id="SM00534">
    <property type="entry name" value="MUTSac"/>
    <property type="match status" value="1"/>
</dbReference>
<dbReference type="SMART" id="SM00533">
    <property type="entry name" value="MUTSd"/>
    <property type="match status" value="1"/>
</dbReference>
<dbReference type="SUPFAM" id="SSF55271">
    <property type="entry name" value="DNA repair protein MutS, domain I"/>
    <property type="match status" value="1"/>
</dbReference>
<dbReference type="SUPFAM" id="SSF53150">
    <property type="entry name" value="DNA repair protein MutS, domain II"/>
    <property type="match status" value="1"/>
</dbReference>
<dbReference type="SUPFAM" id="SSF48334">
    <property type="entry name" value="DNA repair protein MutS, domain III"/>
    <property type="match status" value="1"/>
</dbReference>
<dbReference type="SUPFAM" id="SSF52540">
    <property type="entry name" value="P-loop containing nucleoside triphosphate hydrolases"/>
    <property type="match status" value="1"/>
</dbReference>
<dbReference type="PROSITE" id="PS00486">
    <property type="entry name" value="DNA_MISMATCH_REPAIR_2"/>
    <property type="match status" value="1"/>
</dbReference>
<name>MUTS_CHESB</name>
<keyword id="KW-0067">ATP-binding</keyword>
<keyword id="KW-0227">DNA damage</keyword>
<keyword id="KW-0234">DNA repair</keyword>
<keyword id="KW-0238">DNA-binding</keyword>
<keyword id="KW-0547">Nucleotide-binding</keyword>
<evidence type="ECO:0000255" key="1">
    <source>
        <dbReference type="HAMAP-Rule" id="MF_00096"/>
    </source>
</evidence>
<proteinExistence type="inferred from homology"/>
<sequence length="881" mass="96280">MMQQYIEIKAAHADCLLFYRMGDFYELFFDDAEVASRALGITLTKRGKHRGEDIPMCGVPVHAADDYLQKLIALGHRVAVCEQMEDPAEAKKRGYKAVMRRDVVRLVTPGTITEEKLLDPSEANYLMALGRVKGSEELALAWIDISTGIFRVASTAPDRLLADISRIDPRELIVAEPVYHDAELRPVFDMLGRVVVPQPPVFFDSASAAMRLSRFYGVATLDGFGRFSRAELSAIAGAVAYVEKTQKAERPPLAAPERDEEGKSLFIDPSTRANLELARTLSSSREGSLLKAIDRTVTGAGSRLLAERLMSPLTDPQVIAERLDSVSFFLDEPGLRDRLRAFLKGVPDISRALSRLALNRGGPRDLGALSAGLEAAAAAADLLRGKEAPSEISAALSTLLSLPAALVSHLDRALADDLPLLKRDGGFVRGGYDAELDEMRALRDQSRRVIAGMERDLIEETGIRSLKIRHNNILGYYIEVRANNAGALNGTDEAKARFIHRQTMANAMRFTTTELADLETRIANAADRALAIELAVFERLVGEVVAASEPLRAAAQALAVLDVSAALACLAEGEDYCRPVVDGSLDFHIEGGRHPVVEQALRKQLGEPFVANDCDLSPAEGEKAGAIWLLTGPNMGGKSTFLRQNALIAVLAQMGSFVPARSARIGVVDRLFSRVGASDDLARGRSTFMVEMVETAAILNQAGERSLVILDEIGRGTATFDGLSIAWAAVEYLHEKNRCRALFATHFHEMTALTEKLSRLVNVTMRVKEFEGEVIFLHEVARGAADRSYGIQVARLAGLPQTVVERARDVLHRLEEGETGTKAARIVDDLPLFSAAMRQEPPKSKAPDHLREELTALNPDDMTPREALEVLYKLKRLVIEG</sequence>
<feature type="chain" id="PRO_0000335179" description="DNA mismatch repair protein MutS">
    <location>
        <begin position="1"/>
        <end position="881"/>
    </location>
</feature>
<feature type="binding site" evidence="1">
    <location>
        <begin position="632"/>
        <end position="639"/>
    </location>
    <ligand>
        <name>ATP</name>
        <dbReference type="ChEBI" id="CHEBI:30616"/>
    </ligand>
</feature>
<reference key="1">
    <citation type="submission" date="2006-06" db="EMBL/GenBank/DDBJ databases">
        <title>Complete sequence of chromosome of Mesorhizobium sp. BNC1.</title>
        <authorList>
            <consortium name="US DOE Joint Genome Institute"/>
            <person name="Copeland A."/>
            <person name="Lucas S."/>
            <person name="Lapidus A."/>
            <person name="Barry K."/>
            <person name="Detter J.C."/>
            <person name="Glavina del Rio T."/>
            <person name="Hammon N."/>
            <person name="Israni S."/>
            <person name="Dalin E."/>
            <person name="Tice H."/>
            <person name="Pitluck S."/>
            <person name="Chertkov O."/>
            <person name="Brettin T."/>
            <person name="Bruce D."/>
            <person name="Han C."/>
            <person name="Tapia R."/>
            <person name="Gilna P."/>
            <person name="Schmutz J."/>
            <person name="Larimer F."/>
            <person name="Land M."/>
            <person name="Hauser L."/>
            <person name="Kyrpides N."/>
            <person name="Mikhailova N."/>
            <person name="Richardson P."/>
        </authorList>
    </citation>
    <scope>NUCLEOTIDE SEQUENCE [LARGE SCALE GENOMIC DNA]</scope>
    <source>
        <strain>BNC1</strain>
    </source>
</reference>
<gene>
    <name evidence="1" type="primary">mutS</name>
    <name type="ordered locus">Meso_4031</name>
</gene>
<organism>
    <name type="scientific">Chelativorans sp. (strain BNC1)</name>
    <dbReference type="NCBI Taxonomy" id="266779"/>
    <lineage>
        <taxon>Bacteria</taxon>
        <taxon>Pseudomonadati</taxon>
        <taxon>Pseudomonadota</taxon>
        <taxon>Alphaproteobacteria</taxon>
        <taxon>Hyphomicrobiales</taxon>
        <taxon>Phyllobacteriaceae</taxon>
        <taxon>Chelativorans</taxon>
    </lineage>
</organism>
<comment type="function">
    <text evidence="1">This protein is involved in the repair of mismatches in DNA. It is possible that it carries out the mismatch recognition step. This protein has a weak ATPase activity.</text>
</comment>
<comment type="similarity">
    <text evidence="1">Belongs to the DNA mismatch repair MutS family.</text>
</comment>
<accession>Q11B27</accession>